<feature type="chain" id="PRO_0000201780" description="Lipid A biosynthesis acyltransferase 2">
    <location>
        <begin position="1"/>
        <end position="314"/>
    </location>
</feature>
<feature type="transmembrane region" description="Helical" evidence="1">
    <location>
        <begin position="17"/>
        <end position="37"/>
    </location>
</feature>
<feature type="short sequence motif" description="HXXXXD motif" evidence="1">
    <location>
        <begin position="137"/>
        <end position="142"/>
    </location>
</feature>
<comment type="function">
    <text evidence="1">Catalyzes the transfer of an acyl chain from an acyl-[acyl-carrier-protein] (ACP) to a Kdo(2)-(acyl)-lipid IV(A) to form a Kdo(2)-lipid A.</text>
</comment>
<comment type="catalytic activity">
    <reaction evidence="1">
        <text>an alpha-Kdo-(2-&gt;4)-alpha-Kdo-(2-&gt;6)-(acyl)-lipid IVA + a fatty acyl-[ACP] = an alpha-Kdo-(2-&gt;4)-alpha-Kdo-(2-&gt;6)-lipid A + holo-[ACP]</text>
        <dbReference type="Rhea" id="RHEA:69400"/>
        <dbReference type="Rhea" id="RHEA-COMP:9685"/>
        <dbReference type="Rhea" id="RHEA-COMP:14125"/>
        <dbReference type="ChEBI" id="CHEBI:64479"/>
        <dbReference type="ChEBI" id="CHEBI:138651"/>
        <dbReference type="ChEBI" id="CHEBI:176430"/>
        <dbReference type="ChEBI" id="CHEBI:176431"/>
        <dbReference type="EC" id="2.3.1.243"/>
    </reaction>
</comment>
<comment type="pathway">
    <text evidence="1">Glycolipid biosynthesis; KDO(2)-lipid A biosynthesis; KDO(2)-lipid A from CMP-3-deoxy-D-manno-octulosonate and lipid IV(A): step 4/4.</text>
</comment>
<comment type="pathway">
    <text evidence="1">Bacterial outer membrane biogenesis; lipopolysaccharide biosynthesis.</text>
</comment>
<comment type="subcellular location">
    <subcellularLocation>
        <location evidence="1">Cell inner membrane</location>
        <topology evidence="1">Single-pass membrane protein</topology>
    </subcellularLocation>
</comment>
<comment type="induction">
    <text evidence="3">Induced under limited magnesium growth conditions by the PhoP/PhoQ two-component system.</text>
</comment>
<comment type="disruption phenotype">
    <text evidence="2">A msbB1/msbB2 double mutant is impaired in its capacity to cause TNF-alpha production by human monocytes and to cause rupture and inflammatory destruction of the epithelial barrier in the rabbit ligated intestinal loop model of shigellosis. Mutants have no defect in their ability to enter into epithelial cells.</text>
</comment>
<comment type="similarity">
    <text evidence="1">Belongs to the LpxL/LpxM/LpxP family. LpxM subfamily.</text>
</comment>
<comment type="sequence caution" evidence="6">
    <conflict type="erroneous initiation">
        <sequence resource="EMBL-CDS" id="CAC05860"/>
    </conflict>
    <text>Extended N-terminus.</text>
</comment>
<sequence length="314" mass="36584">MKKYKSEFIPEFKKNYLSPVYWFTWFVLGMIAGISMFPPSFRDPVLAKIGRWVGRLSRKARRRATINLSLCFPEKSDTEREIIVDNMFATALQSIVMMAELAIRGPEKFQKRVFWKGLEILEEIRHNNRNVIFLVPHGWSVDIPAMLLAAQGEKMAAMFHQQRNPVIDYVWNSVRRKFGGRLHSREDGIKPFIQSVRQGYWGYYLPDQDHGPEYSEFADFFATYKATLPIIGRLMNISQAMIIPLFPVYDEKKHFLTIEVRPPMDACIASADNKMIARQMNKTVEILVGSHPEQYIWVLKLLKTRKSNEADPYP</sequence>
<gene>
    <name evidence="1" type="primary">lpxM2</name>
    <name type="synonym">msbB</name>
    <name evidence="4 5" type="synonym">msbB2</name>
    <name type="ordered locus">CP0238</name>
</gene>
<geneLocation type="plasmid">
    <name>pWR100</name>
</geneLocation>
<geneLocation type="plasmid">
    <name>pWR501</name>
</geneLocation>
<geneLocation type="plasmid">
    <name>pMYSH6000</name>
</geneLocation>
<geneLocation type="plasmid">
    <name>pCP301</name>
</geneLocation>
<keyword id="KW-0012">Acyltransferase</keyword>
<keyword id="KW-0997">Cell inner membrane</keyword>
<keyword id="KW-1003">Cell membrane</keyword>
<keyword id="KW-0448">Lipopolysaccharide biosynthesis</keyword>
<keyword id="KW-0472">Membrane</keyword>
<keyword id="KW-0614">Plasmid</keyword>
<keyword id="KW-1185">Reference proteome</keyword>
<keyword id="KW-0808">Transferase</keyword>
<keyword id="KW-0812">Transmembrane</keyword>
<keyword id="KW-1133">Transmembrane helix</keyword>
<reference key="1">
    <citation type="journal article" date="2000" name="Mol. Microbiol.">
        <title>The virulence plasmid pWR100 and the repertoire of proteins secreted by the type III secretion apparatus of Shigella flexneri.</title>
        <authorList>
            <person name="Buchrieser C."/>
            <person name="Glaser P."/>
            <person name="Rusniok C."/>
            <person name="Nedjari H."/>
            <person name="d'Hauteville H."/>
            <person name="Kunst F."/>
            <person name="Sansonetti P.J."/>
            <person name="Parsot C."/>
        </authorList>
    </citation>
    <scope>NUCLEOTIDE SEQUENCE [GENOMIC DNA]</scope>
    <source>
        <strain>M90T / Serotype 5a</strain>
        <plasmid>pWR100</plasmid>
    </source>
</reference>
<reference key="2">
    <citation type="journal article" date="2001" name="Infect. Immun.">
        <title>Complete DNA sequence and analysis of the large virulence plasmid of Shigella flexneri.</title>
        <authorList>
            <person name="Venkatesan M.M."/>
            <person name="Goldberg M.B."/>
            <person name="Rose D.J."/>
            <person name="Grotbeck E.J."/>
            <person name="Burland V."/>
            <person name="Blattner F.R."/>
        </authorList>
    </citation>
    <scope>NUCLEOTIDE SEQUENCE [GENOMIC DNA]</scope>
    <source>
        <strain>M90T / Serotype 5a</strain>
        <plasmid>pWR501</plasmid>
    </source>
</reference>
<reference key="3">
    <citation type="journal article" date="2002" name="Nucleic Acids Res.">
        <title>Genome sequence of Shigella flexneri 2a: insights into pathogenicity through comparison with genomes of Escherichia coli K12 and O157.</title>
        <authorList>
            <person name="Jin Q."/>
            <person name="Yuan Z."/>
            <person name="Xu J."/>
            <person name="Wang Y."/>
            <person name="Shen Y."/>
            <person name="Lu W."/>
            <person name="Wang J."/>
            <person name="Liu H."/>
            <person name="Yang J."/>
            <person name="Yang F."/>
            <person name="Zhang X."/>
            <person name="Zhang J."/>
            <person name="Yang G."/>
            <person name="Wu H."/>
            <person name="Qu D."/>
            <person name="Dong J."/>
            <person name="Sun L."/>
            <person name="Xue Y."/>
            <person name="Zhao A."/>
            <person name="Gao Y."/>
            <person name="Zhu J."/>
            <person name="Kan B."/>
            <person name="Ding K."/>
            <person name="Chen S."/>
            <person name="Cheng H."/>
            <person name="Yao Z."/>
            <person name="He B."/>
            <person name="Chen R."/>
            <person name="Ma D."/>
            <person name="Qiang B."/>
            <person name="Wen Y."/>
            <person name="Hou Y."/>
            <person name="Yu J."/>
        </authorList>
    </citation>
    <scope>NUCLEOTIDE SEQUENCE [LARGE SCALE GENOMIC DNA]</scope>
    <source>
        <strain>301 / Serotype 2a</strain>
        <plasmid>pCP301</plasmid>
    </source>
</reference>
<reference key="4">
    <citation type="journal article" date="1997" name="J. Bacteriol.">
        <title>Plasmid maintenance functions of the large virulence plasmid of Shigella flexneri.</title>
        <authorList>
            <person name="Radnedge L."/>
            <person name="Davis M.A."/>
            <person name="Youngren B."/>
            <person name="Austin S.J."/>
        </authorList>
    </citation>
    <scope>NUCLEOTIDE SEQUENCE [GENOMIC DNA] OF 84-314</scope>
    <source>
        <strain>YSH6000 / Serotype 2a</strain>
        <plasmid>pMYSH6000</plasmid>
    </source>
</reference>
<reference key="5">
    <citation type="journal article" date="2002" name="J. Immunol.">
        <title>Two msbB genes encoding maximal acylation of lipid A are required for invasive Shigella flexneri to mediate inflammatory rupture and destruction of the intestinal epithelium.</title>
        <authorList>
            <person name="D'Hauteville H."/>
            <person name="Khan S."/>
            <person name="Maskell D.J."/>
            <person name="Kussak A."/>
            <person name="Weintraub A."/>
            <person name="Mathison J."/>
            <person name="Ulevitch R.J."/>
            <person name="Wuscher N."/>
            <person name="Parsot C."/>
            <person name="Sansonetti P.J."/>
        </authorList>
    </citation>
    <scope>DISRUPTION PHENOTYPE</scope>
    <source>
        <strain>M90T / Serotype 5a</strain>
    </source>
</reference>
<reference key="6">
    <citation type="journal article" date="2008" name="J. Bacteriol.">
        <title>Differential regulation by magnesium of the two MsbB paralogs of Shigella flexneri.</title>
        <authorList>
            <person name="Goldman S.R."/>
            <person name="Tu Y."/>
            <person name="Goldberg M.B."/>
        </authorList>
    </citation>
    <scope>INDUCTION</scope>
    <source>
        <strain>YSH6000 / Serotype 2a</strain>
    </source>
</reference>
<protein>
    <recommendedName>
        <fullName evidence="1">Lipid A biosynthesis acyltransferase 2</fullName>
        <ecNumber evidence="1">2.3.1.243</ecNumber>
    </recommendedName>
    <alternativeName>
        <fullName evidence="1">Kdo(2)-lauroyl-lipid IV(A) acyltransferase 2</fullName>
    </alternativeName>
</protein>
<organism>
    <name type="scientific">Shigella flexneri</name>
    <dbReference type="NCBI Taxonomy" id="623"/>
    <lineage>
        <taxon>Bacteria</taxon>
        <taxon>Pseudomonadati</taxon>
        <taxon>Pseudomonadota</taxon>
        <taxon>Gammaproteobacteria</taxon>
        <taxon>Enterobacterales</taxon>
        <taxon>Enterobacteriaceae</taxon>
        <taxon>Shigella</taxon>
    </lineage>
</organism>
<name>LPXM2_SHIFL</name>
<accession>O06659</accession>
<accession>Q9AFL5</accession>
<accession>Q9AJU9</accession>
<dbReference type="EC" id="2.3.1.243" evidence="1"/>
<dbReference type="EMBL" id="AL391753">
    <property type="protein sequence ID" value="CAC05860.1"/>
    <property type="status" value="ALT_INIT"/>
    <property type="molecule type" value="Genomic_DNA"/>
</dbReference>
<dbReference type="EMBL" id="AF348706">
    <property type="protein sequence ID" value="AAK18563.1"/>
    <property type="molecule type" value="Genomic_DNA"/>
</dbReference>
<dbReference type="EMBL" id="AF386526">
    <property type="protein sequence ID" value="AAL72336.1"/>
    <property type="molecule type" value="Genomic_DNA"/>
</dbReference>
<dbReference type="EMBL" id="U82621">
    <property type="protein sequence ID" value="AAB58154.1"/>
    <property type="molecule type" value="Genomic_DNA"/>
</dbReference>
<dbReference type="RefSeq" id="NP_085407.1">
    <property type="nucleotide sequence ID" value="NC_002698.1"/>
</dbReference>
<dbReference type="RefSeq" id="NP_858371.1">
    <property type="nucleotide sequence ID" value="NC_004851.1"/>
</dbReference>
<dbReference type="RefSeq" id="WP_004996485.1">
    <property type="nucleotide sequence ID" value="NZ_WPGW01000147.1"/>
</dbReference>
<dbReference type="RefSeq" id="YP_006960300.1">
    <property type="nucleotide sequence ID" value="NC_019197.1"/>
</dbReference>
<dbReference type="RefSeq" id="YP_009062542.1">
    <property type="nucleotide sequence ID" value="NC_024996.1"/>
</dbReference>
<dbReference type="SMR" id="O06659"/>
<dbReference type="PaxDb" id="198214-CP0238"/>
<dbReference type="GeneID" id="1238039"/>
<dbReference type="KEGG" id="sfl:CP0238"/>
<dbReference type="PATRIC" id="fig|198214.7.peg.5500"/>
<dbReference type="HOGENOM" id="CLU_049421_1_0_6"/>
<dbReference type="UniPathway" id="UPA00030"/>
<dbReference type="UniPathway" id="UPA00360">
    <property type="reaction ID" value="UER00486"/>
</dbReference>
<dbReference type="PRO" id="PR:O06659"/>
<dbReference type="Proteomes" id="UP000001006">
    <property type="component" value="Plasmid pCP301"/>
</dbReference>
<dbReference type="GO" id="GO:0009276">
    <property type="term" value="C:Gram-negative-bacterium-type cell wall"/>
    <property type="evidence" value="ECO:0007669"/>
    <property type="project" value="InterPro"/>
</dbReference>
<dbReference type="GO" id="GO:0005886">
    <property type="term" value="C:plasma membrane"/>
    <property type="evidence" value="ECO:0007669"/>
    <property type="project" value="UniProtKB-SubCell"/>
</dbReference>
<dbReference type="GO" id="GO:0016747">
    <property type="term" value="F:acyltransferase activity, transferring groups other than amino-acyl groups"/>
    <property type="evidence" value="ECO:0007669"/>
    <property type="project" value="InterPro"/>
</dbReference>
<dbReference type="GO" id="GO:0036104">
    <property type="term" value="P:Kdo2-lipid A biosynthetic process"/>
    <property type="evidence" value="ECO:0007669"/>
    <property type="project" value="UniProtKB-UniRule"/>
</dbReference>
<dbReference type="GO" id="GO:0009103">
    <property type="term" value="P:lipopolysaccharide biosynthetic process"/>
    <property type="evidence" value="ECO:0007669"/>
    <property type="project" value="UniProtKB-UniRule"/>
</dbReference>
<dbReference type="CDD" id="cd07984">
    <property type="entry name" value="LPLAT_LABLAT-like"/>
    <property type="match status" value="1"/>
</dbReference>
<dbReference type="HAMAP" id="MF_01944">
    <property type="entry name" value="Lipid_A_LpxM"/>
    <property type="match status" value="1"/>
</dbReference>
<dbReference type="InterPro" id="IPR004960">
    <property type="entry name" value="LipA_acyltrans"/>
</dbReference>
<dbReference type="InterPro" id="IPR011921">
    <property type="entry name" value="Lipid_A_MsbB"/>
</dbReference>
<dbReference type="NCBIfam" id="TIGR02208">
    <property type="entry name" value="lipid_A_msbB"/>
    <property type="match status" value="1"/>
</dbReference>
<dbReference type="NCBIfam" id="NF006507">
    <property type="entry name" value="PRK08943.1"/>
    <property type="match status" value="1"/>
</dbReference>
<dbReference type="PANTHER" id="PTHR30606">
    <property type="entry name" value="LIPID A BIOSYNTHESIS LAUROYL ACYLTRANSFERASE"/>
    <property type="match status" value="1"/>
</dbReference>
<dbReference type="PANTHER" id="PTHR30606:SF4">
    <property type="entry name" value="LIPID A BIOSYNTHESIS MYRISTOYLTRANSFERASE"/>
    <property type="match status" value="1"/>
</dbReference>
<dbReference type="Pfam" id="PF03279">
    <property type="entry name" value="Lip_A_acyltrans"/>
    <property type="match status" value="1"/>
</dbReference>
<dbReference type="PIRSF" id="PIRSF026649">
    <property type="entry name" value="MsbB"/>
    <property type="match status" value="1"/>
</dbReference>
<evidence type="ECO:0000255" key="1">
    <source>
        <dbReference type="HAMAP-Rule" id="MF_01944"/>
    </source>
</evidence>
<evidence type="ECO:0000269" key="2">
    <source>
    </source>
</evidence>
<evidence type="ECO:0000269" key="3">
    <source>
    </source>
</evidence>
<evidence type="ECO:0000303" key="4">
    <source>
    </source>
</evidence>
<evidence type="ECO:0000303" key="5">
    <source>
    </source>
</evidence>
<evidence type="ECO:0000305" key="6"/>
<proteinExistence type="evidence at transcript level"/>